<gene>
    <name type="primary">IRX10L</name>
    <name type="synonym">GUT1</name>
    <name type="synonym">GUT2</name>
    <name type="ordered locus">At5g61840</name>
    <name type="ORF">MAC9.17</name>
</gene>
<reference key="1">
    <citation type="journal article" date="2014" name="Plant J.">
        <title>The plant glycosyltransferase clone collection for functional genomics.</title>
        <authorList>
            <person name="Lao J."/>
            <person name="Oikawa A."/>
            <person name="Bromley J.R."/>
            <person name="McInerney P."/>
            <person name="Suttangkakul A."/>
            <person name="Smith-Moritz A.M."/>
            <person name="Plahar H."/>
            <person name="Chiu T.-Y."/>
            <person name="Gonzalez Fernandez-Nino S.M.G."/>
            <person name="Ebert B."/>
            <person name="Yang F."/>
            <person name="Christiansen K.M."/>
            <person name="Hansen S.F."/>
            <person name="Stonebloom S."/>
            <person name="Adams P.D."/>
            <person name="Ronald P.C."/>
            <person name="Hillson N.J."/>
            <person name="Hadi M.Z."/>
            <person name="Vega-Sanchez M.E."/>
            <person name="Loque D."/>
            <person name="Scheller H.V."/>
            <person name="Heazlewood J.L."/>
        </authorList>
    </citation>
    <scope>NUCLEOTIDE SEQUENCE [MRNA]</scope>
    <scope>WEB RESOURCE</scope>
    <scope>GENE FAMILY</scope>
    <source>
        <strain>cv. Columbia</strain>
    </source>
</reference>
<reference key="2">
    <citation type="journal article" date="1998" name="DNA Res.">
        <title>Structural analysis of Arabidopsis thaliana chromosome 5. IV. Sequence features of the regions of 1,456,315 bp covered by nineteen physically assigned P1 and TAC clones.</title>
        <authorList>
            <person name="Sato S."/>
            <person name="Kaneko T."/>
            <person name="Kotani H."/>
            <person name="Nakamura Y."/>
            <person name="Asamizu E."/>
            <person name="Miyajima N."/>
            <person name="Tabata S."/>
        </authorList>
    </citation>
    <scope>NUCLEOTIDE SEQUENCE [LARGE SCALE GENOMIC DNA]</scope>
    <source>
        <strain>cv. Columbia</strain>
    </source>
</reference>
<reference key="3">
    <citation type="journal article" date="2017" name="Plant J.">
        <title>Araport11: a complete reannotation of the Arabidopsis thaliana reference genome.</title>
        <authorList>
            <person name="Cheng C.Y."/>
            <person name="Krishnakumar V."/>
            <person name="Chan A.P."/>
            <person name="Thibaud-Nissen F."/>
            <person name="Schobel S."/>
            <person name="Town C.D."/>
        </authorList>
    </citation>
    <scope>GENOME REANNOTATION</scope>
    <source>
        <strain>cv. Columbia</strain>
    </source>
</reference>
<reference key="4">
    <citation type="journal article" date="2003" name="Science">
        <title>Empirical analysis of transcriptional activity in the Arabidopsis genome.</title>
        <authorList>
            <person name="Yamada K."/>
            <person name="Lim J."/>
            <person name="Dale J.M."/>
            <person name="Chen H."/>
            <person name="Shinn P."/>
            <person name="Palm C.J."/>
            <person name="Southwick A.M."/>
            <person name="Wu H.C."/>
            <person name="Kim C.J."/>
            <person name="Nguyen M."/>
            <person name="Pham P.K."/>
            <person name="Cheuk R.F."/>
            <person name="Karlin-Newmann G."/>
            <person name="Liu S.X."/>
            <person name="Lam B."/>
            <person name="Sakano H."/>
            <person name="Wu T."/>
            <person name="Yu G."/>
            <person name="Miranda M."/>
            <person name="Quach H.L."/>
            <person name="Tripp M."/>
            <person name="Chang C.H."/>
            <person name="Lee J.M."/>
            <person name="Toriumi M.J."/>
            <person name="Chan M.M."/>
            <person name="Tang C.C."/>
            <person name="Onodera C.S."/>
            <person name="Deng J.M."/>
            <person name="Akiyama K."/>
            <person name="Ansari Y."/>
            <person name="Arakawa T."/>
            <person name="Banh J."/>
            <person name="Banno F."/>
            <person name="Bowser L."/>
            <person name="Brooks S.Y."/>
            <person name="Carninci P."/>
            <person name="Chao Q."/>
            <person name="Choy N."/>
            <person name="Enju A."/>
            <person name="Goldsmith A.D."/>
            <person name="Gurjal M."/>
            <person name="Hansen N.F."/>
            <person name="Hayashizaki Y."/>
            <person name="Johnson-Hopson C."/>
            <person name="Hsuan V.W."/>
            <person name="Iida K."/>
            <person name="Karnes M."/>
            <person name="Khan S."/>
            <person name="Koesema E."/>
            <person name="Ishida J."/>
            <person name="Jiang P.X."/>
            <person name="Jones T."/>
            <person name="Kawai J."/>
            <person name="Kamiya A."/>
            <person name="Meyers C."/>
            <person name="Nakajima M."/>
            <person name="Narusaka M."/>
            <person name="Seki M."/>
            <person name="Sakurai T."/>
            <person name="Satou M."/>
            <person name="Tamse R."/>
            <person name="Vaysberg M."/>
            <person name="Wallender E.K."/>
            <person name="Wong C."/>
            <person name="Yamamura Y."/>
            <person name="Yuan S."/>
            <person name="Shinozaki K."/>
            <person name="Davis R.W."/>
            <person name="Theologis A."/>
            <person name="Ecker J.R."/>
        </authorList>
    </citation>
    <scope>NUCLEOTIDE SEQUENCE [LARGE SCALE MRNA]</scope>
    <source>
        <strain>cv. Columbia</strain>
    </source>
</reference>
<reference key="5">
    <citation type="submission" date="2002-03" db="EMBL/GenBank/DDBJ databases">
        <title>Full-length cDNA from Arabidopsis thaliana.</title>
        <authorList>
            <person name="Brover V.V."/>
            <person name="Troukhan M.E."/>
            <person name="Alexandrov N.A."/>
            <person name="Lu Y.-P."/>
            <person name="Flavell R.B."/>
            <person name="Feldmann K.A."/>
        </authorList>
    </citation>
    <scope>NUCLEOTIDE SEQUENCE [LARGE SCALE MRNA]</scope>
</reference>
<reference key="6">
    <citation type="journal article" date="2002" name="Proc. Natl. Acad. Sci. U.S.A.">
        <title>A pectin glucuronyltransferase gene is essential for intercellular attachment in the plant meristem.</title>
        <authorList>
            <person name="Iwai H."/>
            <person name="Masaoka N."/>
            <person name="Ishii T."/>
            <person name="Satoh S."/>
        </authorList>
    </citation>
    <scope>NUCLEOTIDE SEQUENCE [MRNA] OF 75-415</scope>
</reference>
<reference key="7">
    <citation type="journal article" date="2009" name="Plant J.">
        <title>The Arabidopsis IRX10 and IRX10-LIKE glycosyltransferases are critical for glucuronoxylan biosynthesis during secondary cell wall formation.</title>
        <authorList>
            <person name="Wu A.-M."/>
            <person name="Rihouey C."/>
            <person name="Seveno M."/>
            <person name="Hoernblad E."/>
            <person name="Singh S.K."/>
            <person name="Matsunaga T."/>
            <person name="Ishii T."/>
            <person name="Lerouge P."/>
            <person name="Marchant A."/>
        </authorList>
    </citation>
    <scope>FUNCTION</scope>
    <scope>DISRUPTION PHENOTYPE</scope>
    <scope>TISSUE SPECIFICITY</scope>
    <scope>DEVELOPMENTAL STAGE</scope>
</reference>
<reference key="8">
    <citation type="journal article" date="2009" name="Plant J.">
        <title>Characterization of IRX10 and IRX10-like reveals an essential role in glucuronoxylan biosynthesis in Arabidopsis.</title>
        <authorList>
            <person name="Brown D.M."/>
            <person name="Zhang Z."/>
            <person name="Stephens E."/>
            <person name="Dupree P."/>
            <person name="Turner S.R."/>
        </authorList>
    </citation>
    <scope>FUNCTION</scope>
    <scope>DISRUPTION PHENOTYPE</scope>
</reference>
<reference key="9">
    <citation type="journal article" date="2010" name="Plant Physiol.">
        <title>Analysis of the Arabidopsis IRX9/IRX9-L and IRX14/IRX14-L pairs of glycosyltransferase genes reveals critical contributions to biosynthesis of the hemicellulose glucuronoxylan.</title>
        <authorList>
            <person name="Wu A.M."/>
            <person name="Hoernblad E."/>
            <person name="Voxeur A."/>
            <person name="Gerber L."/>
            <person name="Rihouey C."/>
            <person name="Lerouge P."/>
            <person name="Marchant A."/>
        </authorList>
    </citation>
    <scope>FUNCTION</scope>
    <scope>TISSUE SPECIFICITY</scope>
</reference>
<sequence>MKLSSCVLIFLLCNTFSSISAFRLSRSQPTERISGSAGDVLEDDPVGRLKVFVYELPSKYNKKILQKDPRCLNHMFAAEIYMQRFLLSSPVRTLNPEEADWFYVPVYTTCDLTPNGLPLPFKSPRMMRSAIQLIASNWPYWNRTEGADHFFVVPHDFGACFHYQEEKAIGRGILPLLQRATLVQTFGQRNHVCLKEGSITVPPYAPPQKMQSHLIPEKTPRSIFVYFRGLFYDVGNDPEGGYYARGARAAVWENFKDNPLFDISTEHPTTYYEDMQRAIFCLCPLGWAPWSPRLVEAVIFGCIPVIIADDIVLPFADAIPWEDIGVFVDEKDVPYLDTILTSIPPEVILRKQRLLANPSMKQAMLFPQPAQPGDAFHQVLNGLARKLPHERSVYLRPGEKLLNWTAGPVADLKPW</sequence>
<protein>
    <recommendedName>
        <fullName>Probable beta-1,4-xylosyltransferase IRX10L</fullName>
        <ecNumber>2.4.2.-</ecNumber>
    </recommendedName>
    <alternativeName>
        <fullName>Glucuronoxylan glucuronosyltransferase 1</fullName>
        <shortName>AtGUT1</shortName>
    </alternativeName>
    <alternativeName>
        <fullName>Glucuronoxylan glucuronosyltransferase 2</fullName>
        <shortName>AtGUT2</shortName>
    </alternativeName>
    <alternativeName>
        <fullName>Protein IRREGULAR XYLEM 10-like</fullName>
    </alternativeName>
    <alternativeName>
        <fullName>Xylan xylosyltransferase IRX10L</fullName>
    </alternativeName>
</protein>
<proteinExistence type="evidence at transcript level"/>
<organism>
    <name type="scientific">Arabidopsis thaliana</name>
    <name type="common">Mouse-ear cress</name>
    <dbReference type="NCBI Taxonomy" id="3702"/>
    <lineage>
        <taxon>Eukaryota</taxon>
        <taxon>Viridiplantae</taxon>
        <taxon>Streptophyta</taxon>
        <taxon>Embryophyta</taxon>
        <taxon>Tracheophyta</taxon>
        <taxon>Spermatophyta</taxon>
        <taxon>Magnoliopsida</taxon>
        <taxon>eudicotyledons</taxon>
        <taxon>Gunneridae</taxon>
        <taxon>Pentapetalae</taxon>
        <taxon>rosids</taxon>
        <taxon>malvids</taxon>
        <taxon>Brassicales</taxon>
        <taxon>Brassicaceae</taxon>
        <taxon>Camelineae</taxon>
        <taxon>Arabidopsis</taxon>
    </lineage>
</organism>
<keyword id="KW-0961">Cell wall biogenesis/degradation</keyword>
<keyword id="KW-0325">Glycoprotein</keyword>
<keyword id="KW-0328">Glycosyltransferase</keyword>
<keyword id="KW-0333">Golgi apparatus</keyword>
<keyword id="KW-0472">Membrane</keyword>
<keyword id="KW-1185">Reference proteome</keyword>
<keyword id="KW-0735">Signal-anchor</keyword>
<keyword id="KW-0808">Transferase</keyword>
<keyword id="KW-0812">Transmembrane</keyword>
<keyword id="KW-1133">Transmembrane helix</keyword>
<feature type="chain" id="PRO_0000407577" description="Probable beta-1,4-xylosyltransferase IRX10L">
    <location>
        <begin position="1"/>
        <end position="415"/>
    </location>
</feature>
<feature type="topological domain" description="Cytoplasmic" evidence="2">
    <location>
        <position position="1"/>
    </location>
</feature>
<feature type="transmembrane region" description="Helical; Signal-anchor for type II membrane protein" evidence="2">
    <location>
        <begin position="2"/>
        <end position="22"/>
    </location>
</feature>
<feature type="topological domain" description="Lumenal" evidence="2">
    <location>
        <begin position="23"/>
        <end position="415"/>
    </location>
</feature>
<feature type="glycosylation site" description="N-linked (GlcNAc...) asparagine" evidence="3">
    <location>
        <position position="142"/>
    </location>
</feature>
<feature type="glycosylation site" description="N-linked (GlcNAc...) asparagine" evidence="3">
    <location>
        <position position="403"/>
    </location>
</feature>
<feature type="sequence conflict" description="In Ref. 5; AAM64940." evidence="7" ref="5">
    <original>G</original>
    <variation>R</variation>
    <location>
        <position position="158"/>
    </location>
</feature>
<comment type="function">
    <text evidence="4 5 6">Involved in the synthesis of the hemicellulose glucuronoxylan, a major component of secondary cell walls. Probably involved in the elongation of glucuronoxylan xylosyl backbone.</text>
</comment>
<comment type="subcellular location">
    <subcellularLocation>
        <location evidence="1">Golgi apparatus membrane</location>
        <topology evidence="1">Single-pass type II membrane protein</topology>
    </subcellularLocation>
</comment>
<comment type="tissue specificity">
    <text evidence="4 6">Present in the xylem and phloem, and, to a lower extent, in interfascicular cells. Expressed in the root tip, shoot apical meristem (SAM), xylem cells of roots and stems, and in the vasculature of roots, cotyledons and leaves.</text>
</comment>
<comment type="developmental stage">
    <text evidence="4">In flowers, expressed in anthers, stigmas and styles.</text>
</comment>
<comment type="disruption phenotype">
    <text evidence="4 5">No visible phenotype (PubMed:18980662). Slightly short inflorescence and reduced fertility (PubMed:18980649).</text>
</comment>
<comment type="similarity">
    <text evidence="7">Belongs to the glycosyltransferase 47 family.</text>
</comment>
<comment type="sequence caution" evidence="7">
    <conflict type="erroneous gene model prediction">
        <sequence resource="EMBL-CDS" id="BAB10084"/>
    </conflict>
</comment>
<comment type="online information" name="CAZY, the Carbohydrate Active enZYmes database">
    <link uri="https://www.cazy.org/GT64_all.html"/>
</comment>
<accession>Q940Q8</accession>
<accession>Q8LB70</accession>
<accession>Q9FLS5</accession>
<accession>W8PUW2</accession>
<evidence type="ECO:0000250" key="1">
    <source>
        <dbReference type="UniProtKB" id="Q9ZUV3"/>
    </source>
</evidence>
<evidence type="ECO:0000255" key="2"/>
<evidence type="ECO:0000255" key="3">
    <source>
        <dbReference type="PROSITE-ProRule" id="PRU00498"/>
    </source>
</evidence>
<evidence type="ECO:0000269" key="4">
    <source>
    </source>
</evidence>
<evidence type="ECO:0000269" key="5">
    <source>
    </source>
</evidence>
<evidence type="ECO:0000269" key="6">
    <source>
    </source>
</evidence>
<evidence type="ECO:0000305" key="7"/>
<dbReference type="EC" id="2.4.2.-"/>
<dbReference type="EMBL" id="KJ138631">
    <property type="protein sequence ID" value="AHL38571.1"/>
    <property type="molecule type" value="mRNA"/>
</dbReference>
<dbReference type="EMBL" id="AB010069">
    <property type="protein sequence ID" value="BAB10084.1"/>
    <property type="status" value="ALT_SEQ"/>
    <property type="molecule type" value="Genomic_DNA"/>
</dbReference>
<dbReference type="EMBL" id="CP002688">
    <property type="protein sequence ID" value="AED97524.1"/>
    <property type="molecule type" value="Genomic_DNA"/>
</dbReference>
<dbReference type="EMBL" id="AY054180">
    <property type="protein sequence ID" value="AAL06841.1"/>
    <property type="molecule type" value="mRNA"/>
</dbReference>
<dbReference type="EMBL" id="AY066039">
    <property type="protein sequence ID" value="AAL47406.1"/>
    <property type="molecule type" value="mRNA"/>
</dbReference>
<dbReference type="EMBL" id="AY087390">
    <property type="protein sequence ID" value="AAM64940.1"/>
    <property type="molecule type" value="mRNA"/>
</dbReference>
<dbReference type="EMBL" id="AB080693">
    <property type="protein sequence ID" value="BAC20929.1"/>
    <property type="molecule type" value="mRNA"/>
</dbReference>
<dbReference type="RefSeq" id="NP_568941.1">
    <property type="nucleotide sequence ID" value="NM_125578.3"/>
</dbReference>
<dbReference type="FunCoup" id="Q940Q8">
    <property type="interactions" value="1596"/>
</dbReference>
<dbReference type="STRING" id="3702.Q940Q8"/>
<dbReference type="CAZy" id="GT47">
    <property type="family name" value="Glycosyltransferase Family 47"/>
</dbReference>
<dbReference type="GlyCosmos" id="Q940Q8">
    <property type="glycosylation" value="2 sites, No reported glycans"/>
</dbReference>
<dbReference type="GlyGen" id="Q940Q8">
    <property type="glycosylation" value="2 sites"/>
</dbReference>
<dbReference type="PaxDb" id="3702-AT5G61840.1"/>
<dbReference type="ProteomicsDB" id="232252"/>
<dbReference type="EnsemblPlants" id="AT5G61840.1">
    <property type="protein sequence ID" value="AT5G61840.1"/>
    <property type="gene ID" value="AT5G61840"/>
</dbReference>
<dbReference type="GeneID" id="836306"/>
<dbReference type="Gramene" id="AT5G61840.1">
    <property type="protein sequence ID" value="AT5G61840.1"/>
    <property type="gene ID" value="AT5G61840"/>
</dbReference>
<dbReference type="KEGG" id="ath:AT5G61840"/>
<dbReference type="Araport" id="AT5G61840"/>
<dbReference type="TAIR" id="AT5G61840">
    <property type="gene designation" value="GUT1"/>
</dbReference>
<dbReference type="eggNOG" id="KOG1021">
    <property type="taxonomic scope" value="Eukaryota"/>
</dbReference>
<dbReference type="HOGENOM" id="CLU_039682_1_0_1"/>
<dbReference type="InParanoid" id="Q940Q8"/>
<dbReference type="OMA" id="CQPKIYV"/>
<dbReference type="OrthoDB" id="1924787at2759"/>
<dbReference type="PhylomeDB" id="Q940Q8"/>
<dbReference type="BioCyc" id="ARA:AT5G61840-MONOMER"/>
<dbReference type="PRO" id="PR:Q940Q8"/>
<dbReference type="Proteomes" id="UP000006548">
    <property type="component" value="Chromosome 5"/>
</dbReference>
<dbReference type="ExpressionAtlas" id="Q940Q8">
    <property type="expression patterns" value="baseline and differential"/>
</dbReference>
<dbReference type="GO" id="GO:0005768">
    <property type="term" value="C:endosome"/>
    <property type="evidence" value="ECO:0007005"/>
    <property type="project" value="TAIR"/>
</dbReference>
<dbReference type="GO" id="GO:0005794">
    <property type="term" value="C:Golgi apparatus"/>
    <property type="evidence" value="ECO:0000314"/>
    <property type="project" value="TAIR"/>
</dbReference>
<dbReference type="GO" id="GO:0005797">
    <property type="term" value="C:Golgi medial cisterna"/>
    <property type="evidence" value="ECO:0007005"/>
    <property type="project" value="TAIR"/>
</dbReference>
<dbReference type="GO" id="GO:0000139">
    <property type="term" value="C:Golgi membrane"/>
    <property type="evidence" value="ECO:0007669"/>
    <property type="project" value="UniProtKB-SubCell"/>
</dbReference>
<dbReference type="GO" id="GO:0005802">
    <property type="term" value="C:trans-Golgi network"/>
    <property type="evidence" value="ECO:0007005"/>
    <property type="project" value="TAIR"/>
</dbReference>
<dbReference type="GO" id="GO:0047517">
    <property type="term" value="F:1,4-beta-D-xylan synthase activity"/>
    <property type="evidence" value="ECO:0000314"/>
    <property type="project" value="TAIR"/>
</dbReference>
<dbReference type="GO" id="GO:0080116">
    <property type="term" value="F:glucuronoxylan glucuronosyltransferase activity"/>
    <property type="evidence" value="ECO:0000315"/>
    <property type="project" value="TAIR"/>
</dbReference>
<dbReference type="GO" id="GO:0042546">
    <property type="term" value="P:cell wall biogenesis"/>
    <property type="evidence" value="ECO:0000315"/>
    <property type="project" value="TAIR"/>
</dbReference>
<dbReference type="GO" id="GO:0071555">
    <property type="term" value="P:cell wall organization"/>
    <property type="evidence" value="ECO:0007669"/>
    <property type="project" value="UniProtKB-KW"/>
</dbReference>
<dbReference type="GO" id="GO:0010417">
    <property type="term" value="P:glucuronoxylan biosynthetic process"/>
    <property type="evidence" value="ECO:0000315"/>
    <property type="project" value="TAIR"/>
</dbReference>
<dbReference type="GO" id="GO:0009834">
    <property type="term" value="P:plant-type secondary cell wall biogenesis"/>
    <property type="evidence" value="ECO:0000315"/>
    <property type="project" value="TAIR"/>
</dbReference>
<dbReference type="GO" id="GO:0006486">
    <property type="term" value="P:protein glycosylation"/>
    <property type="evidence" value="ECO:0007669"/>
    <property type="project" value="InterPro"/>
</dbReference>
<dbReference type="GO" id="GO:0045492">
    <property type="term" value="P:xylan biosynthetic process"/>
    <property type="evidence" value="ECO:0000314"/>
    <property type="project" value="TAIR"/>
</dbReference>
<dbReference type="InterPro" id="IPR004263">
    <property type="entry name" value="Exostosin"/>
</dbReference>
<dbReference type="InterPro" id="IPR040911">
    <property type="entry name" value="Exostosin_GT47"/>
</dbReference>
<dbReference type="PANTHER" id="PTHR11062:SF200">
    <property type="entry name" value="BETA-1,4-XYLOSYLTRANSFERASE IRX10L-RELATED"/>
    <property type="match status" value="1"/>
</dbReference>
<dbReference type="PANTHER" id="PTHR11062">
    <property type="entry name" value="EXOSTOSIN HEPARAN SULFATE GLYCOSYLTRANSFERASE -RELATED"/>
    <property type="match status" value="1"/>
</dbReference>
<dbReference type="Pfam" id="PF03016">
    <property type="entry name" value="Exostosin_GT47"/>
    <property type="match status" value="1"/>
</dbReference>
<name>IX10L_ARATH</name>